<keyword id="KW-0025">Alternative splicing</keyword>
<keyword id="KW-0903">Direct protein sequencing</keyword>
<keyword id="KW-1015">Disulfide bond</keyword>
<keyword id="KW-0325">Glycoprotein</keyword>
<keyword id="KW-0472">Membrane</keyword>
<keyword id="KW-0479">Metal-binding</keyword>
<keyword id="KW-0675">Receptor</keyword>
<keyword id="KW-1185">Reference proteome</keyword>
<keyword id="KW-0677">Repeat</keyword>
<keyword id="KW-0732">Signal</keyword>
<keyword id="KW-0812">Transmembrane</keyword>
<keyword id="KW-1133">Transmembrane helix</keyword>
<keyword id="KW-0862">Zinc</keyword>
<comment type="function">
    <text>This is a receptor for the anterior pituitary hormone prolactin.</text>
</comment>
<comment type="subunit">
    <text evidence="1">Interacts with SMARCA1. Interacts with NEK3 and VAV2 and this interaction is prolactin-dependent.</text>
</comment>
<comment type="subcellular location">
    <subcellularLocation>
        <location>Membrane</location>
        <topology>Single-pass type I membrane protein</topology>
    </subcellularLocation>
</comment>
<comment type="alternative products">
    <event type="alternative splicing"/>
    <isoform>
        <id>Q28172-1</id>
        <name>Long</name>
        <sequence type="displayed"/>
    </isoform>
    <isoform>
        <id>Q28172-2</id>
        <name>Short</name>
        <sequence type="described" ref="VSP_001718 VSP_001719"/>
    </isoform>
</comment>
<comment type="tissue specificity">
    <text evidence="5">Expressed in all tissues examined; liver, peripheral blood lymphocytes, endometrium, corpus luteum, intestine, fetal thymus, fetal spleen, fetal liver and fetal brain.</text>
</comment>
<comment type="domain">
    <text>The WSXWS motif appears to be necessary for proper protein folding and thereby efficient intracellular transport and cell-surface receptor binding.</text>
</comment>
<comment type="domain">
    <text>The box 1 motif is required for JAK interaction and/or activation.</text>
</comment>
<comment type="similarity">
    <text evidence="7">Belongs to the type I cytokine receptor family. Type 1 subfamily.</text>
</comment>
<reference key="1">
    <citation type="journal article" date="1992" name="Mol. Cell. Endocrinol.">
        <title>Molecular cloning of the bovine prolactin receptor and distribution of prolactin and growth hormone receptor transcripts in fetal and utero-placental tissues.</title>
        <authorList>
            <person name="Scott P."/>
            <person name="Kessler M.A."/>
            <person name="Schuler L.A."/>
        </authorList>
    </citation>
    <scope>NUCLEOTIDE SEQUENCE (ISOFORM LONG)</scope>
    <source>
        <tissue>Endometrium</tissue>
    </source>
</reference>
<reference key="2">
    <citation type="journal article" date="1997" name="Endocrinology">
        <title>Prolactin receptor heterogeneity in bovine fetal and maternal tissues.</title>
        <authorList>
            <person name="Schuler L.A."/>
            <person name="Nagel R.J."/>
            <person name="Gao J."/>
            <person name="Horseman N.D."/>
            <person name="Kessler M.A."/>
        </authorList>
    </citation>
    <scope>NUCLEOTIDE SEQUENCE [MRNA] (ISOFORM SHORT)</scope>
    <scope>TISSUE SPECIFICITY</scope>
    <source>
        <tissue>Endometrium</tissue>
    </source>
</reference>
<reference key="3">
    <citation type="journal article" date="1995" name="J. Endocrinol.">
        <title>Extracellular domain of prolactin receptor from bovine mammary gland: expression in Escherichia coli, purification and characterization of its interaction with lactogenic hormones.</title>
        <authorList>
            <person name="Tchelet A."/>
            <person name="Staten N.R."/>
            <person name="Creely D.P."/>
            <person name="Krivi G.G."/>
            <person name="Gertler A."/>
        </authorList>
    </citation>
    <scope>NUCLEOTIDE SEQUENCE OF 25-234</scope>
    <scope>PROTEIN SEQUENCE OF 25-33</scope>
    <source>
        <tissue>Mammary gland</tissue>
    </source>
</reference>
<reference key="4">
    <citation type="journal article" date="1997" name="J. Mol. Endocrinol.">
        <title>Long and short forms of the ovine prolactin receptor: cDNA cloning and genomic analysis reveal that the two forms arise by different alternative splicing mechanisms in ruminants and in rodents.</title>
        <authorList>
            <person name="Bignon C."/>
            <person name="Binart N."/>
            <person name="Ormandy C."/>
            <person name="Schuler L.A."/>
            <person name="Kelly P.A."/>
            <person name="Djiane J."/>
        </authorList>
    </citation>
    <scope>ALTERNATIVE SPLICING</scope>
</reference>
<name>PRLR_BOVIN</name>
<gene>
    <name type="primary">PRLR</name>
</gene>
<organism>
    <name type="scientific">Bos taurus</name>
    <name type="common">Bovine</name>
    <dbReference type="NCBI Taxonomy" id="9913"/>
    <lineage>
        <taxon>Eukaryota</taxon>
        <taxon>Metazoa</taxon>
        <taxon>Chordata</taxon>
        <taxon>Craniata</taxon>
        <taxon>Vertebrata</taxon>
        <taxon>Euteleostomi</taxon>
        <taxon>Mammalia</taxon>
        <taxon>Eutheria</taxon>
        <taxon>Laurasiatheria</taxon>
        <taxon>Artiodactyla</taxon>
        <taxon>Ruminantia</taxon>
        <taxon>Pecora</taxon>
        <taxon>Bovidae</taxon>
        <taxon>Bovinae</taxon>
        <taxon>Bos</taxon>
    </lineage>
</organism>
<evidence type="ECO:0000250" key="1"/>
<evidence type="ECO:0000255" key="2"/>
<evidence type="ECO:0000255" key="3">
    <source>
        <dbReference type="PROSITE-ProRule" id="PRU00316"/>
    </source>
</evidence>
<evidence type="ECO:0000256" key="4">
    <source>
        <dbReference type="SAM" id="MobiDB-lite"/>
    </source>
</evidence>
<evidence type="ECO:0000269" key="5">
    <source>
    </source>
</evidence>
<evidence type="ECO:0000303" key="6">
    <source>
    </source>
</evidence>
<evidence type="ECO:0000305" key="7"/>
<evidence type="ECO:0000305" key="8">
    <source>
    </source>
</evidence>
<dbReference type="EMBL" id="L02549">
    <property type="protein sequence ID" value="AAA51417.1"/>
    <property type="molecule type" value="mRNA"/>
</dbReference>
<dbReference type="EMBL" id="AF027403">
    <property type="protein sequence ID" value="AAB83999.1"/>
    <property type="molecule type" value="mRNA"/>
</dbReference>
<dbReference type="EMBL" id="AF042780">
    <property type="protein sequence ID" value="AAB97748.1"/>
    <property type="molecule type" value="Genomic_DNA"/>
</dbReference>
<dbReference type="EMBL" id="AF042780">
    <property type="protein sequence ID" value="AAB97747.1"/>
    <property type="status" value="ALT_SEQ"/>
    <property type="molecule type" value="Genomic_DNA"/>
</dbReference>
<dbReference type="PIR" id="I45971">
    <property type="entry name" value="I45971"/>
</dbReference>
<dbReference type="RefSeq" id="NP_001034815.1">
    <molecule id="Q28172-1"/>
    <property type="nucleotide sequence ID" value="NM_001039726.2"/>
</dbReference>
<dbReference type="RefSeq" id="NP_776580.1">
    <molecule id="Q28172-2"/>
    <property type="nucleotide sequence ID" value="NM_174155.3"/>
</dbReference>
<dbReference type="SMR" id="Q28172"/>
<dbReference type="FunCoup" id="Q28172">
    <property type="interactions" value="204"/>
</dbReference>
<dbReference type="STRING" id="9913.ENSBTAP00000069979"/>
<dbReference type="GlyCosmos" id="Q28172">
    <property type="glycosylation" value="2 sites, No reported glycans"/>
</dbReference>
<dbReference type="GlyGen" id="Q28172">
    <property type="glycosylation" value="2 sites"/>
</dbReference>
<dbReference type="PaxDb" id="9913-ENSBTAP00000014437"/>
<dbReference type="GeneID" id="281422"/>
<dbReference type="KEGG" id="bta:281422"/>
<dbReference type="CTD" id="5618"/>
<dbReference type="eggNOG" id="ENOG502R22A">
    <property type="taxonomic scope" value="Eukaryota"/>
</dbReference>
<dbReference type="InParanoid" id="Q28172"/>
<dbReference type="OrthoDB" id="8858139at2759"/>
<dbReference type="Proteomes" id="UP000009136">
    <property type="component" value="Unplaced"/>
</dbReference>
<dbReference type="GO" id="GO:0009897">
    <property type="term" value="C:external side of plasma membrane"/>
    <property type="evidence" value="ECO:0000318"/>
    <property type="project" value="GO_Central"/>
</dbReference>
<dbReference type="GO" id="GO:0005886">
    <property type="term" value="C:plasma membrane"/>
    <property type="evidence" value="ECO:0000314"/>
    <property type="project" value="AgBase"/>
</dbReference>
<dbReference type="GO" id="GO:0043235">
    <property type="term" value="C:receptor complex"/>
    <property type="evidence" value="ECO:0000318"/>
    <property type="project" value="GO_Central"/>
</dbReference>
<dbReference type="GO" id="GO:0019955">
    <property type="term" value="F:cytokine binding"/>
    <property type="evidence" value="ECO:0000318"/>
    <property type="project" value="GO_Central"/>
</dbReference>
<dbReference type="GO" id="GO:0046872">
    <property type="term" value="F:metal ion binding"/>
    <property type="evidence" value="ECO:0007669"/>
    <property type="project" value="UniProtKB-KW"/>
</dbReference>
<dbReference type="GO" id="GO:0017046">
    <property type="term" value="F:peptide hormone binding"/>
    <property type="evidence" value="ECO:0000318"/>
    <property type="project" value="GO_Central"/>
</dbReference>
<dbReference type="GO" id="GO:0004925">
    <property type="term" value="F:prolactin receptor activity"/>
    <property type="evidence" value="ECO:0000318"/>
    <property type="project" value="GO_Central"/>
</dbReference>
<dbReference type="GO" id="GO:0019221">
    <property type="term" value="P:cytokine-mediated signaling pathway"/>
    <property type="evidence" value="ECO:0000318"/>
    <property type="project" value="GO_Central"/>
</dbReference>
<dbReference type="GO" id="GO:0008284">
    <property type="term" value="P:positive regulation of cell population proliferation"/>
    <property type="evidence" value="ECO:0000318"/>
    <property type="project" value="GO_Central"/>
</dbReference>
<dbReference type="CDD" id="cd00063">
    <property type="entry name" value="FN3"/>
    <property type="match status" value="2"/>
</dbReference>
<dbReference type="FunFam" id="2.60.40.10:FF:000287">
    <property type="entry name" value="Prolactin receptor"/>
    <property type="match status" value="1"/>
</dbReference>
<dbReference type="FunFam" id="2.60.40.10:FF:000358">
    <property type="entry name" value="Prolactin receptor"/>
    <property type="match status" value="1"/>
</dbReference>
<dbReference type="Gene3D" id="2.60.40.10">
    <property type="entry name" value="Immunoglobulins"/>
    <property type="match status" value="2"/>
</dbReference>
<dbReference type="InterPro" id="IPR003961">
    <property type="entry name" value="FN3_dom"/>
</dbReference>
<dbReference type="InterPro" id="IPR036116">
    <property type="entry name" value="FN3_sf"/>
</dbReference>
<dbReference type="InterPro" id="IPR015152">
    <property type="entry name" value="Growth/epo_recpt_lig-bind"/>
</dbReference>
<dbReference type="InterPro" id="IPR013783">
    <property type="entry name" value="Ig-like_fold"/>
</dbReference>
<dbReference type="InterPro" id="IPR003528">
    <property type="entry name" value="Long_hematopoietin_rcpt_CS"/>
</dbReference>
<dbReference type="InterPro" id="IPR050379">
    <property type="entry name" value="Type-I_Cytokine_Rcpt"/>
</dbReference>
<dbReference type="PANTHER" id="PTHR23036">
    <property type="entry name" value="CYTOKINE RECEPTOR"/>
    <property type="match status" value="1"/>
</dbReference>
<dbReference type="PANTHER" id="PTHR23036:SF86">
    <property type="entry name" value="PROLACTIN RECEPTOR"/>
    <property type="match status" value="1"/>
</dbReference>
<dbReference type="Pfam" id="PF09067">
    <property type="entry name" value="EpoR_lig-bind"/>
    <property type="match status" value="1"/>
</dbReference>
<dbReference type="Pfam" id="PF00041">
    <property type="entry name" value="fn3"/>
    <property type="match status" value="1"/>
</dbReference>
<dbReference type="SMART" id="SM00060">
    <property type="entry name" value="FN3"/>
    <property type="match status" value="2"/>
</dbReference>
<dbReference type="SUPFAM" id="SSF49265">
    <property type="entry name" value="Fibronectin type III"/>
    <property type="match status" value="2"/>
</dbReference>
<dbReference type="PROSITE" id="PS50853">
    <property type="entry name" value="FN3"/>
    <property type="match status" value="2"/>
</dbReference>
<dbReference type="PROSITE" id="PS01352">
    <property type="entry name" value="HEMATOPO_REC_L_F1"/>
    <property type="match status" value="1"/>
</dbReference>
<proteinExistence type="evidence at protein level"/>
<sequence length="581" mass="65153">MKENAASRVVFILLLFLSVSLLNGQSPPEKPKLVKCRSPGKETFTCWWEPGADGGLPTNYTLTYHKEGETLIHECPDYKTGGPNSCYFSKKHTSIWKMYVITVNAINQMGISSSDPLYVHVTYIVEPEPPANLTLELKHPEDRKPYLWIKWSPPTMTDVKSGWFIIQYEIRLKPEKATDWETHFTLKQTQLKIFNLYPGQKYLVQIRCKPDHGYWSEWSPESSIQIPNDFPVKDTSMWIFVAILSAVICLIMVWAVALKGYSMVTCILPPVPGPKIKGFDVHLLEKGKSEELLRALESQDFPPTSDCEDLLMEFIEVDDCEDQQLMPRPSKEHTEQGVKPMHLDLDSDSGRGSCDSPSLLSEKCDEPQAHPSKFHTPEGPEKLENPETNLTCLQAPQSTSVEGKIPYFLANGPKSSTWPFPQPPSLYSPRYSYHNIADVCELALGMAGTTATSLDQTDQHALKASKTIETGREGKATKQRESEGCSSKPDQDTVWPRPQDKTPLISAKPLEYVEIHKVSQDGVLALFPKQNEKFGAPEASKEYSKVSRVTDSNILVLVPDPQAQNLTLLEEPAKKAPPALP</sequence>
<accession>Q28172</accession>
<accession>O18880</accession>
<accession>O46591</accession>
<protein>
    <recommendedName>
        <fullName>Prolactin receptor</fullName>
        <shortName>PRL-R</shortName>
    </recommendedName>
</protein>
<feature type="signal peptide" evidence="8">
    <location>
        <begin position="1"/>
        <end position="24"/>
    </location>
</feature>
<feature type="chain" id="PRO_0000010975" description="Prolactin receptor">
    <location>
        <begin position="25"/>
        <end position="581"/>
    </location>
</feature>
<feature type="topological domain" description="Extracellular" evidence="2">
    <location>
        <begin position="25"/>
        <end position="237"/>
    </location>
</feature>
<feature type="transmembrane region" description="Helical" evidence="2">
    <location>
        <begin position="238"/>
        <end position="258"/>
    </location>
</feature>
<feature type="topological domain" description="Cytoplasmic" evidence="2">
    <location>
        <begin position="259"/>
        <end position="581"/>
    </location>
</feature>
<feature type="domain" description="Fibronectin type-III 1" evidence="3">
    <location>
        <begin position="27"/>
        <end position="127"/>
    </location>
</feature>
<feature type="domain" description="Fibronectin type-III 2" evidence="3">
    <location>
        <begin position="129"/>
        <end position="229"/>
    </location>
</feature>
<feature type="region of interest" description="Disordered" evidence="4">
    <location>
        <begin position="324"/>
        <end position="384"/>
    </location>
</feature>
<feature type="region of interest" description="Disordered" evidence="4">
    <location>
        <begin position="458"/>
        <end position="499"/>
    </location>
</feature>
<feature type="short sequence motif" description="WSXWS motif">
    <location>
        <begin position="215"/>
        <end position="219"/>
    </location>
</feature>
<feature type="short sequence motif" description="Box 1 motif">
    <location>
        <begin position="267"/>
        <end position="275"/>
    </location>
</feature>
<feature type="compositionally biased region" description="Basic and acidic residues" evidence="4">
    <location>
        <begin position="329"/>
        <end position="349"/>
    </location>
</feature>
<feature type="compositionally biased region" description="Basic and acidic residues" evidence="4">
    <location>
        <begin position="375"/>
        <end position="384"/>
    </location>
</feature>
<feature type="compositionally biased region" description="Basic and acidic residues" evidence="4">
    <location>
        <begin position="469"/>
        <end position="483"/>
    </location>
</feature>
<feature type="binding site" evidence="1">
    <location>
        <position position="211"/>
    </location>
    <ligand>
        <name>Zn(2+)</name>
        <dbReference type="ChEBI" id="CHEBI:29105"/>
    </ligand>
</feature>
<feature type="binding site" evidence="1">
    <location>
        <position position="212"/>
    </location>
    <ligand>
        <name>Zn(2+)</name>
        <dbReference type="ChEBI" id="CHEBI:29105"/>
    </ligand>
</feature>
<feature type="glycosylation site" description="N-linked (GlcNAc...) asparagine" evidence="2">
    <location>
        <position position="59"/>
    </location>
</feature>
<feature type="glycosylation site" description="N-linked (GlcNAc...) asparagine" evidence="2">
    <location>
        <position position="132"/>
    </location>
</feature>
<feature type="disulfide bond" evidence="1">
    <location>
        <begin position="36"/>
        <end position="46"/>
    </location>
</feature>
<feature type="disulfide bond" evidence="1">
    <location>
        <begin position="75"/>
        <end position="86"/>
    </location>
</feature>
<feature type="splice variant" id="VSP_001718" description="In isoform Short." evidence="6">
    <original>KGKSEELLRAL</original>
    <variation>ISQPSRLVSMF</variation>
    <location>
        <begin position="286"/>
        <end position="296"/>
    </location>
</feature>
<feature type="splice variant" id="VSP_001719" description="In isoform Short." evidence="6">
    <location>
        <begin position="297"/>
        <end position="581"/>
    </location>
</feature>
<feature type="sequence conflict" description="In Ref. 3; AA sequence." evidence="7" ref="3">
    <original>H</original>
    <variation>D</variation>
    <location>
        <position position="120"/>
    </location>
</feature>
<feature type="sequence conflict" description="In Ref. 3; AA sequence." evidence="7" ref="3">
    <original>E</original>
    <variation>D</variation>
    <location>
        <position position="128"/>
    </location>
</feature>
<feature type="sequence conflict" description="In Ref. 3; AA sequence." evidence="7" ref="3">
    <original>L</original>
    <variation>V</variation>
    <location>
        <position position="137"/>
    </location>
</feature>
<feature type="sequence conflict" description="In Ref. 3; AA sequence." evidence="7" ref="3">
    <original>E</original>
    <variation>H</variation>
    <location>
        <position position="141"/>
    </location>
</feature>
<feature type="sequence conflict" description="In Ref. 3; AA sequence." evidence="7" ref="3">
    <original>MT</original>
    <variation>IM</variation>
    <location>
        <begin position="156"/>
        <end position="157"/>
    </location>
</feature>
<feature type="sequence conflict" description="In Ref. 3; AA sequence." evidence="7" ref="3">
    <original>L</original>
    <variation>P</variation>
    <location>
        <position position="186"/>
    </location>
</feature>